<feature type="signal peptide" evidence="3">
    <location>
        <begin position="1"/>
        <end position="28"/>
    </location>
</feature>
<feature type="chain" id="PRO_0000033179" description="Sclerostin">
    <location>
        <begin position="29"/>
        <end position="213"/>
    </location>
</feature>
<feature type="domain" description="CTCK">
    <location>
        <begin position="82"/>
        <end position="172"/>
    </location>
</feature>
<feature type="region of interest" description="Disordered" evidence="4">
    <location>
        <begin position="178"/>
        <end position="213"/>
    </location>
</feature>
<feature type="compositionally biased region" description="Basic residues" evidence="4">
    <location>
        <begin position="190"/>
        <end position="201"/>
    </location>
</feature>
<feature type="glycosylation site" description="N-linked (GlcNAc...) asparagine" evidence="3">
    <location>
        <position position="53"/>
    </location>
</feature>
<feature type="glycosylation site" description="N-linked (GlcNAc...) asparagine" evidence="3">
    <location>
        <position position="175"/>
    </location>
</feature>
<feature type="disulfide bond" evidence="1">
    <location>
        <begin position="80"/>
        <end position="134"/>
    </location>
</feature>
<feature type="disulfide bond" evidence="1">
    <location>
        <begin position="94"/>
        <end position="148"/>
    </location>
</feature>
<feature type="disulfide bond" evidence="1">
    <location>
        <begin position="105"/>
        <end position="165"/>
    </location>
</feature>
<feature type="disulfide bond" evidence="1">
    <location>
        <begin position="109"/>
        <end position="167"/>
    </location>
</feature>
<sequence>MQLSLAPCLACLLVHAAFVAVESQGWQAFKNDATEIIPGLREYPEPPQELENNQTMNRAENGGRPPHHPYDTKDVSEYSCRELHYTRFVTDGPCRSAKPVTELVCSGQCGPARLLPNAIGRVKWWRPNGPDFRCIPDRYRAQRVQLLCPGGAAPRSRKVRLVASCKCKRLTRFHNQSELKDFGPETARPQKGRKPRPRARGAKANQAELENAY</sequence>
<keyword id="KW-1015">Disulfide bond</keyword>
<keyword id="KW-0325">Glycoprotein</keyword>
<keyword id="KW-0358">Heparin-binding</keyword>
<keyword id="KW-1185">Reference proteome</keyword>
<keyword id="KW-0964">Secreted</keyword>
<keyword id="KW-0732">Signal</keyword>
<keyword id="KW-0879">Wnt signaling pathway</keyword>
<comment type="function">
    <text evidence="1">Negative regulator of bone growth that acts through inhibition of Wnt signaling and bone formation.</text>
</comment>
<comment type="subunit">
    <text evidence="1">Interacts with LRP4 (via the extracellular domain); the interaction facilitates the inhibition of Wnt signaling. Interacts with LRP5 (via the first two YWTD-EGF repeat domains); the interaction inhibits Wnt-mediated signaling. Interacts with LRP6.</text>
</comment>
<comment type="subcellular location">
    <subcellularLocation>
        <location evidence="5">Secreted</location>
    </subcellularLocation>
</comment>
<comment type="induction">
    <text>Down-regulated by parathyroid hormone (PTH).</text>
</comment>
<comment type="similarity">
    <text evidence="5">Belongs to the sclerostin family.</text>
</comment>
<accession>Q99P67</accession>
<evidence type="ECO:0000250" key="1"/>
<evidence type="ECO:0000250" key="2">
    <source>
        <dbReference type="UniProtKB" id="Q99P68"/>
    </source>
</evidence>
<evidence type="ECO:0000255" key="3"/>
<evidence type="ECO:0000256" key="4">
    <source>
        <dbReference type="SAM" id="MobiDB-lite"/>
    </source>
</evidence>
<evidence type="ECO:0000305" key="5"/>
<evidence type="ECO:0000312" key="6">
    <source>
        <dbReference type="RGD" id="69358"/>
    </source>
</evidence>
<reference key="1">
    <citation type="journal article" date="2001" name="Am. J. Hum. Genet.">
        <title>Bone dysplasia sclerosteosis results from loss of the SOST gene product, a novel cystine knot-containing protein.</title>
        <authorList>
            <person name="Brunkow M.E."/>
            <person name="Gardner J.C."/>
            <person name="Van Ness J."/>
            <person name="Paeper B.W."/>
            <person name="Kovacevich B.R."/>
            <person name="Proll S."/>
            <person name="Skonier J.E."/>
            <person name="Zhao L."/>
            <person name="Sabo P.J."/>
            <person name="Fu Y.H."/>
            <person name="Alisch R.S."/>
            <person name="Gillett L."/>
            <person name="Colbert T."/>
            <person name="Tacconi P."/>
            <person name="Galas D."/>
            <person name="Hamersma H."/>
            <person name="Beighton P."/>
            <person name="Mulligan J.T."/>
        </authorList>
    </citation>
    <scope>NUCLEOTIDE SEQUENCE [MRNA]</scope>
    <source>
        <strain>Sprague-Dawley</strain>
    </source>
</reference>
<reference key="2">
    <citation type="journal article" date="2005" name="Bone">
        <title>SOST is a target gene for PTH in bone.</title>
        <authorList>
            <person name="Keller H."/>
            <person name="Kneissel M."/>
        </authorList>
    </citation>
    <scope>DOWN-REGULATION BY PTH</scope>
</reference>
<proteinExistence type="evidence at transcript level"/>
<dbReference type="EMBL" id="AF326741">
    <property type="protein sequence ID" value="AAK13456.1"/>
    <property type="molecule type" value="mRNA"/>
</dbReference>
<dbReference type="RefSeq" id="NP_085073.1">
    <property type="nucleotide sequence ID" value="NM_030584.2"/>
</dbReference>
<dbReference type="SMR" id="Q99P67"/>
<dbReference type="FunCoup" id="Q99P67">
    <property type="interactions" value="175"/>
</dbReference>
<dbReference type="STRING" id="10116.ENSRNOP00000028238"/>
<dbReference type="ChEMBL" id="CHEMBL4523438"/>
<dbReference type="GlyCosmos" id="Q99P67">
    <property type="glycosylation" value="2 sites, No reported glycans"/>
</dbReference>
<dbReference type="GlyGen" id="Q99P67">
    <property type="glycosylation" value="2 sites"/>
</dbReference>
<dbReference type="PaxDb" id="10116-ENSRNOP00000028238"/>
<dbReference type="Ensembl" id="ENSRNOT00000099214.1">
    <property type="protein sequence ID" value="ENSRNOP00000081514.1"/>
    <property type="gene ID" value="ENSRNOG00000071073.1"/>
</dbReference>
<dbReference type="GeneID" id="80722"/>
<dbReference type="KEGG" id="rno:80722"/>
<dbReference type="UCSC" id="RGD:69358">
    <property type="organism name" value="rat"/>
</dbReference>
<dbReference type="AGR" id="RGD:69358"/>
<dbReference type="CTD" id="50964"/>
<dbReference type="RGD" id="69358">
    <property type="gene designation" value="Sost"/>
</dbReference>
<dbReference type="eggNOG" id="ENOG502QTBG">
    <property type="taxonomic scope" value="Eukaryota"/>
</dbReference>
<dbReference type="GeneTree" id="ENSGT00390000014900"/>
<dbReference type="HOGENOM" id="CLU_087969_1_0_1"/>
<dbReference type="InParanoid" id="Q99P67"/>
<dbReference type="OMA" id="MFKNDAT"/>
<dbReference type="OrthoDB" id="6624188at2759"/>
<dbReference type="PhylomeDB" id="Q99P67"/>
<dbReference type="TreeFam" id="TF353019"/>
<dbReference type="Reactome" id="R-RNO-3772470">
    <property type="pathway name" value="Negative regulation of TCF-dependent signaling by WNT ligand antagonists"/>
</dbReference>
<dbReference type="PRO" id="PR:Q99P67"/>
<dbReference type="Proteomes" id="UP000002494">
    <property type="component" value="Chromosome 10"/>
</dbReference>
<dbReference type="Bgee" id="ENSRNOG00000020805">
    <property type="expression patterns" value="Expressed in thymus and 5 other cell types or tissues"/>
</dbReference>
<dbReference type="GO" id="GO:0005615">
    <property type="term" value="C:extracellular space"/>
    <property type="evidence" value="ECO:0000314"/>
    <property type="project" value="RGD"/>
</dbReference>
<dbReference type="GO" id="GO:0005794">
    <property type="term" value="C:Golgi apparatus"/>
    <property type="evidence" value="ECO:0000314"/>
    <property type="project" value="UniProtKB"/>
</dbReference>
<dbReference type="GO" id="GO:0032991">
    <property type="term" value="C:protein-containing complex"/>
    <property type="evidence" value="ECO:0000314"/>
    <property type="project" value="RGD"/>
</dbReference>
<dbReference type="GO" id="GO:0036122">
    <property type="term" value="F:BMP binding"/>
    <property type="evidence" value="ECO:0000318"/>
    <property type="project" value="GO_Central"/>
</dbReference>
<dbReference type="GO" id="GO:0030246">
    <property type="term" value="F:carbohydrate binding"/>
    <property type="evidence" value="ECO:0000266"/>
    <property type="project" value="RGD"/>
</dbReference>
<dbReference type="GO" id="GO:0140297">
    <property type="term" value="F:DNA-binding transcription factor binding"/>
    <property type="evidence" value="ECO:0000266"/>
    <property type="project" value="RGD"/>
</dbReference>
<dbReference type="GO" id="GO:0008201">
    <property type="term" value="F:heparin binding"/>
    <property type="evidence" value="ECO:0007669"/>
    <property type="project" value="UniProtKB-KW"/>
</dbReference>
<dbReference type="GO" id="GO:0140678">
    <property type="term" value="F:molecular function inhibitor activity"/>
    <property type="evidence" value="ECO:0000266"/>
    <property type="project" value="RGD"/>
</dbReference>
<dbReference type="GO" id="GO:0030509">
    <property type="term" value="P:BMP signaling pathway"/>
    <property type="evidence" value="ECO:0000266"/>
    <property type="project" value="RGD"/>
</dbReference>
<dbReference type="GO" id="GO:0060070">
    <property type="term" value="P:canonical Wnt signaling pathway"/>
    <property type="evidence" value="ECO:0000266"/>
    <property type="project" value="RGD"/>
</dbReference>
<dbReference type="GO" id="GO:0071374">
    <property type="term" value="P:cellular response to parathyroid hormone stimulus"/>
    <property type="evidence" value="ECO:0000266"/>
    <property type="project" value="RGD"/>
</dbReference>
<dbReference type="GO" id="GO:0030514">
    <property type="term" value="P:negative regulation of BMP signaling pathway"/>
    <property type="evidence" value="ECO:0000266"/>
    <property type="project" value="RGD"/>
</dbReference>
<dbReference type="GO" id="GO:0090090">
    <property type="term" value="P:negative regulation of canonical Wnt signaling pathway"/>
    <property type="evidence" value="ECO:0000266"/>
    <property type="project" value="RGD"/>
</dbReference>
<dbReference type="GO" id="GO:0030279">
    <property type="term" value="P:negative regulation of ossification"/>
    <property type="evidence" value="ECO:0000266"/>
    <property type="project" value="RGD"/>
</dbReference>
<dbReference type="GO" id="GO:0031333">
    <property type="term" value="P:negative regulation of protein-containing complex assembly"/>
    <property type="evidence" value="ECO:0000266"/>
    <property type="project" value="RGD"/>
</dbReference>
<dbReference type="GO" id="GO:0030178">
    <property type="term" value="P:negative regulation of Wnt signaling pathway"/>
    <property type="evidence" value="ECO:0000266"/>
    <property type="project" value="RGD"/>
</dbReference>
<dbReference type="GO" id="GO:0001503">
    <property type="term" value="P:ossification"/>
    <property type="evidence" value="ECO:0000270"/>
    <property type="project" value="RGD"/>
</dbReference>
<dbReference type="GO" id="GO:0045893">
    <property type="term" value="P:positive regulation of DNA-templated transcription"/>
    <property type="evidence" value="ECO:0000266"/>
    <property type="project" value="RGD"/>
</dbReference>
<dbReference type="GO" id="GO:0009612">
    <property type="term" value="P:response to mechanical stimulus"/>
    <property type="evidence" value="ECO:0000266"/>
    <property type="project" value="RGD"/>
</dbReference>
<dbReference type="FunFam" id="2.10.90.10:FF:000036">
    <property type="entry name" value="Sclerostin"/>
    <property type="match status" value="1"/>
</dbReference>
<dbReference type="Gene3D" id="2.10.90.10">
    <property type="entry name" value="Cystine-knot cytokines"/>
    <property type="match status" value="1"/>
</dbReference>
<dbReference type="InterPro" id="IPR029034">
    <property type="entry name" value="Cystine-knot_cytokine"/>
</dbReference>
<dbReference type="InterPro" id="IPR008835">
    <property type="entry name" value="Sclerostin/SOSTDC1"/>
</dbReference>
<dbReference type="PANTHER" id="PTHR14903:SF4">
    <property type="entry name" value="SCLEROSTIN"/>
    <property type="match status" value="1"/>
</dbReference>
<dbReference type="PANTHER" id="PTHR14903">
    <property type="entry name" value="SCLEROSTIN-RELATED"/>
    <property type="match status" value="1"/>
</dbReference>
<dbReference type="Pfam" id="PF05463">
    <property type="entry name" value="Sclerostin"/>
    <property type="match status" value="1"/>
</dbReference>
<name>SOST_RAT</name>
<protein>
    <recommendedName>
        <fullName evidence="2">Sclerostin</fullName>
    </recommendedName>
</protein>
<gene>
    <name evidence="6" type="primary">Sost</name>
</gene>
<organism>
    <name type="scientific">Rattus norvegicus</name>
    <name type="common">Rat</name>
    <dbReference type="NCBI Taxonomy" id="10116"/>
    <lineage>
        <taxon>Eukaryota</taxon>
        <taxon>Metazoa</taxon>
        <taxon>Chordata</taxon>
        <taxon>Craniata</taxon>
        <taxon>Vertebrata</taxon>
        <taxon>Euteleostomi</taxon>
        <taxon>Mammalia</taxon>
        <taxon>Eutheria</taxon>
        <taxon>Euarchontoglires</taxon>
        <taxon>Glires</taxon>
        <taxon>Rodentia</taxon>
        <taxon>Myomorpha</taxon>
        <taxon>Muroidea</taxon>
        <taxon>Muridae</taxon>
        <taxon>Murinae</taxon>
        <taxon>Rattus</taxon>
    </lineage>
</organism>